<reference key="1">
    <citation type="journal article" date="1990" name="J. Bacteriol.">
        <title>Characterization of a gene involved in histidine biosynthesis in Halobacterium (Haloferax) volcanii: isolation and rapid mapping by transformation of an auxotroph with cosmid DNA.</title>
        <authorList>
            <person name="Conover R.K."/>
            <person name="Doolittle W.F."/>
        </authorList>
    </citation>
    <scope>NUCLEOTIDE SEQUENCE [GENOMIC DNA]</scope>
</reference>
<reference key="2">
    <citation type="journal article" date="2010" name="PLoS ONE">
        <title>The complete genome sequence of Haloferax volcanii DS2, a model archaeon.</title>
        <authorList>
            <person name="Hartman A.L."/>
            <person name="Norais C."/>
            <person name="Badger J.H."/>
            <person name="Delmas S."/>
            <person name="Haldenby S."/>
            <person name="Madupu R."/>
            <person name="Robinson J."/>
            <person name="Khouri H."/>
            <person name="Ren Q."/>
            <person name="Lowe T.M."/>
            <person name="Maupin-Furlow J."/>
            <person name="Pohlschroder M."/>
            <person name="Daniels C."/>
            <person name="Pfeiffer F."/>
            <person name="Allers T."/>
            <person name="Eisen J.A."/>
        </authorList>
    </citation>
    <scope>NUCLEOTIDE SEQUENCE [LARGE SCALE GENOMIC DNA]</scope>
    <source>
        <strain>ATCC 29605 / DSM 3757 / JCM 8879 / NBRC 14742 / NCIMB 2012 / VKM B-1768 / DS2</strain>
    </source>
</reference>
<keyword id="KW-0028">Amino-acid biosynthesis</keyword>
<keyword id="KW-0032">Aminotransferase</keyword>
<keyword id="KW-0368">Histidine biosynthesis</keyword>
<keyword id="KW-0663">Pyridoxal phosphate</keyword>
<keyword id="KW-1185">Reference proteome</keyword>
<keyword id="KW-0808">Transferase</keyword>
<proteinExistence type="inferred from homology"/>
<dbReference type="EC" id="2.6.1.9"/>
<dbReference type="EMBL" id="M33161">
    <property type="protein sequence ID" value="AAA72824.1"/>
    <property type="molecule type" value="Genomic_DNA"/>
</dbReference>
<dbReference type="EMBL" id="CP001956">
    <property type="protein sequence ID" value="ADE02846.1"/>
    <property type="molecule type" value="Genomic_DNA"/>
</dbReference>
<dbReference type="PIR" id="A35397">
    <property type="entry name" value="A35397"/>
</dbReference>
<dbReference type="RefSeq" id="WP_004043644.1">
    <property type="nucleotide sequence ID" value="NC_013967.1"/>
</dbReference>
<dbReference type="SMR" id="P17736"/>
<dbReference type="STRING" id="309800.HVO_1295"/>
<dbReference type="PaxDb" id="309800-C498_12268"/>
<dbReference type="EnsemblBacteria" id="ADE02846">
    <property type="protein sequence ID" value="ADE02846"/>
    <property type="gene ID" value="HVO_1295"/>
</dbReference>
<dbReference type="GeneID" id="8924037"/>
<dbReference type="KEGG" id="hvo:HVO_1295"/>
<dbReference type="eggNOG" id="arCOG04273">
    <property type="taxonomic scope" value="Archaea"/>
</dbReference>
<dbReference type="HOGENOM" id="CLU_017584_3_3_2"/>
<dbReference type="OrthoDB" id="9929at2157"/>
<dbReference type="UniPathway" id="UPA00031">
    <property type="reaction ID" value="UER00012"/>
</dbReference>
<dbReference type="Proteomes" id="UP000008243">
    <property type="component" value="Chromosome"/>
</dbReference>
<dbReference type="GO" id="GO:0004400">
    <property type="term" value="F:histidinol-phosphate transaminase activity"/>
    <property type="evidence" value="ECO:0007669"/>
    <property type="project" value="UniProtKB-UniRule"/>
</dbReference>
<dbReference type="GO" id="GO:0030170">
    <property type="term" value="F:pyridoxal phosphate binding"/>
    <property type="evidence" value="ECO:0007669"/>
    <property type="project" value="InterPro"/>
</dbReference>
<dbReference type="GO" id="GO:0000105">
    <property type="term" value="P:L-histidine biosynthetic process"/>
    <property type="evidence" value="ECO:0007669"/>
    <property type="project" value="UniProtKB-UniRule"/>
</dbReference>
<dbReference type="CDD" id="cd00609">
    <property type="entry name" value="AAT_like"/>
    <property type="match status" value="1"/>
</dbReference>
<dbReference type="Gene3D" id="3.90.1150.10">
    <property type="entry name" value="Aspartate Aminotransferase, domain 1"/>
    <property type="match status" value="1"/>
</dbReference>
<dbReference type="Gene3D" id="3.40.640.10">
    <property type="entry name" value="Type I PLP-dependent aspartate aminotransferase-like (Major domain)"/>
    <property type="match status" value="1"/>
</dbReference>
<dbReference type="HAMAP" id="MF_01023">
    <property type="entry name" value="HisC_aminotrans_2"/>
    <property type="match status" value="1"/>
</dbReference>
<dbReference type="InterPro" id="IPR001917">
    <property type="entry name" value="Aminotrans_II_pyridoxalP_BS"/>
</dbReference>
<dbReference type="InterPro" id="IPR004839">
    <property type="entry name" value="Aminotransferase_I/II_large"/>
</dbReference>
<dbReference type="InterPro" id="IPR005861">
    <property type="entry name" value="HisP_aminotrans"/>
</dbReference>
<dbReference type="InterPro" id="IPR050106">
    <property type="entry name" value="HistidinolP_aminotransfase"/>
</dbReference>
<dbReference type="InterPro" id="IPR015424">
    <property type="entry name" value="PyrdxlP-dep_Trfase"/>
</dbReference>
<dbReference type="InterPro" id="IPR015421">
    <property type="entry name" value="PyrdxlP-dep_Trfase_major"/>
</dbReference>
<dbReference type="InterPro" id="IPR015422">
    <property type="entry name" value="PyrdxlP-dep_Trfase_small"/>
</dbReference>
<dbReference type="NCBIfam" id="TIGR01141">
    <property type="entry name" value="hisC"/>
    <property type="match status" value="1"/>
</dbReference>
<dbReference type="PANTHER" id="PTHR43643:SF6">
    <property type="entry name" value="HISTIDINOL-PHOSPHATE AMINOTRANSFERASE"/>
    <property type="match status" value="1"/>
</dbReference>
<dbReference type="PANTHER" id="PTHR43643">
    <property type="entry name" value="HISTIDINOL-PHOSPHATE AMINOTRANSFERASE 2"/>
    <property type="match status" value="1"/>
</dbReference>
<dbReference type="Pfam" id="PF00155">
    <property type="entry name" value="Aminotran_1_2"/>
    <property type="match status" value="1"/>
</dbReference>
<dbReference type="SUPFAM" id="SSF53383">
    <property type="entry name" value="PLP-dependent transferases"/>
    <property type="match status" value="1"/>
</dbReference>
<dbReference type="PROSITE" id="PS00599">
    <property type="entry name" value="AA_TRANSFER_CLASS_2"/>
    <property type="match status" value="1"/>
</dbReference>
<accession>P17736</accession>
<accession>D4GXD6</accession>
<gene>
    <name type="primary">hisC</name>
    <name type="ordered locus">HVO_1295</name>
</gene>
<comment type="catalytic activity">
    <reaction>
        <text>L-histidinol phosphate + 2-oxoglutarate = 3-(imidazol-4-yl)-2-oxopropyl phosphate + L-glutamate</text>
        <dbReference type="Rhea" id="RHEA:23744"/>
        <dbReference type="ChEBI" id="CHEBI:16810"/>
        <dbReference type="ChEBI" id="CHEBI:29985"/>
        <dbReference type="ChEBI" id="CHEBI:57766"/>
        <dbReference type="ChEBI" id="CHEBI:57980"/>
        <dbReference type="EC" id="2.6.1.9"/>
    </reaction>
</comment>
<comment type="cofactor">
    <cofactor evidence="1">
        <name>pyridoxal 5'-phosphate</name>
        <dbReference type="ChEBI" id="CHEBI:597326"/>
    </cofactor>
</comment>
<comment type="pathway">
    <text>Amino-acid biosynthesis; L-histidine biosynthesis; L-histidine from 5-phospho-alpha-D-ribose 1-diphosphate: step 7/9.</text>
</comment>
<comment type="similarity">
    <text evidence="3">Belongs to the class-II pyridoxal-phosphate-dependent aminotransferase family. Histidinol-phosphate aminotransferase subfamily.</text>
</comment>
<organism>
    <name type="scientific">Haloferax volcanii (strain ATCC 29605 / DSM 3757 / JCM 8879 / NBRC 14742 / NCIMB 2012 / VKM B-1768 / DS2)</name>
    <name type="common">Halobacterium volcanii</name>
    <dbReference type="NCBI Taxonomy" id="309800"/>
    <lineage>
        <taxon>Archaea</taxon>
        <taxon>Methanobacteriati</taxon>
        <taxon>Methanobacteriota</taxon>
        <taxon>Stenosarchaea group</taxon>
        <taxon>Halobacteria</taxon>
        <taxon>Halobacteriales</taxon>
        <taxon>Haloferacaceae</taxon>
        <taxon>Haloferax</taxon>
    </lineage>
</organism>
<name>HIS8_HALVD</name>
<sequence length="361" mass="39418">MQPRDLSAHAPYVPGRGTEEVARELGMDPEDLTKLSSNENPHGPSPKAVAAIEDAAPTVSVYPKTAHTDLTERLADKWGLAPEQVWVSPGADGSIDYLTRAVLEPDDRILEPAPGFSYYSMSARYHHGDAVQYEVSKDDDFEQTADLVLDAYDGERMVYLTTPHNPTGSVLPREELVELAESVEEHTLLVVDEAYGEFAEEPSAIDLLSEYDNVAALRTFSKAYGLAGLRIGYACVPEAWADAYARVNTPFAASEVACRAALAALDDEEHVEKSVESARWSRDYLREHLDAPTWESEGNFVLVEVGDATAVTEAAQREGVIVRDCGSFGLPECIRVSCGTETQTKRAVDVLNRIVSEVPTA</sequence>
<evidence type="ECO:0000250" key="1"/>
<evidence type="ECO:0000256" key="2">
    <source>
        <dbReference type="SAM" id="MobiDB-lite"/>
    </source>
</evidence>
<evidence type="ECO:0000305" key="3"/>
<protein>
    <recommendedName>
        <fullName>Histidinol-phosphate aminotransferase</fullName>
        <ecNumber>2.6.1.9</ecNumber>
    </recommendedName>
    <alternativeName>
        <fullName>Imidazole acetol-phosphate transaminase</fullName>
    </alternativeName>
</protein>
<feature type="chain" id="PRO_0000153494" description="Histidinol-phosphate aminotransferase">
    <location>
        <begin position="1"/>
        <end position="361"/>
    </location>
</feature>
<feature type="region of interest" description="Disordered" evidence="2">
    <location>
        <begin position="26"/>
        <end position="45"/>
    </location>
</feature>
<feature type="modified residue" description="N6-(pyridoxal phosphate)lysine" evidence="1">
    <location>
        <position position="222"/>
    </location>
</feature>